<feature type="chain" id="PRO_0000421023" description="Zinc finger protein 728">
    <location>
        <begin position="1"/>
        <end position="622"/>
    </location>
</feature>
<feature type="domain" description="KRAB" evidence="2">
    <location>
        <begin position="4"/>
        <end position="75"/>
    </location>
</feature>
<feature type="zinc finger region" description="C2H2-type 1" evidence="1">
    <location>
        <begin position="228"/>
        <end position="250"/>
    </location>
</feature>
<feature type="zinc finger region" description="C2H2-type 2" evidence="1">
    <location>
        <begin position="256"/>
        <end position="278"/>
    </location>
</feature>
<feature type="zinc finger region" description="C2H2-type 3" evidence="1">
    <location>
        <begin position="284"/>
        <end position="306"/>
    </location>
</feature>
<feature type="zinc finger region" description="C2H2-type 4" evidence="1">
    <location>
        <begin position="312"/>
        <end position="334"/>
    </location>
</feature>
<feature type="zinc finger region" description="C2H2-type 5" evidence="1">
    <location>
        <begin position="340"/>
        <end position="362"/>
    </location>
</feature>
<feature type="zinc finger region" description="C2H2-type 6" evidence="1">
    <location>
        <begin position="368"/>
        <end position="390"/>
    </location>
</feature>
<feature type="zinc finger region" description="C2H2-type 7" evidence="1">
    <location>
        <begin position="396"/>
        <end position="418"/>
    </location>
</feature>
<feature type="zinc finger region" description="C2H2-type 8" evidence="1">
    <location>
        <begin position="424"/>
        <end position="446"/>
    </location>
</feature>
<feature type="zinc finger region" description="C2H2-type 9" evidence="1">
    <location>
        <begin position="452"/>
        <end position="474"/>
    </location>
</feature>
<feature type="zinc finger region" description="C2H2-type 10" evidence="1">
    <location>
        <begin position="480"/>
        <end position="502"/>
    </location>
</feature>
<feature type="zinc finger region" description="C2H2-type 11" evidence="1">
    <location>
        <begin position="508"/>
        <end position="530"/>
    </location>
</feature>
<feature type="zinc finger region" description="C2H2-type 12" evidence="1">
    <location>
        <begin position="536"/>
        <end position="558"/>
    </location>
</feature>
<feature type="zinc finger region" description="C2H2-type 13" evidence="1">
    <location>
        <begin position="564"/>
        <end position="586"/>
    </location>
</feature>
<feature type="zinc finger region" description="C2H2-type 14" evidence="1">
    <location>
        <begin position="592"/>
        <end position="614"/>
    </location>
</feature>
<accession>P0DKX0</accession>
<evidence type="ECO:0000255" key="1">
    <source>
        <dbReference type="PROSITE-ProRule" id="PRU00042"/>
    </source>
</evidence>
<evidence type="ECO:0000255" key="2">
    <source>
        <dbReference type="PROSITE-ProRule" id="PRU00119"/>
    </source>
</evidence>
<proteinExistence type="predicted"/>
<gene>
    <name type="primary">ZNF728</name>
</gene>
<name>ZN728_HUMAN</name>
<dbReference type="EMBL" id="AC011502">
    <property type="status" value="NOT_ANNOTATED_CDS"/>
    <property type="molecule type" value="Genomic_DNA"/>
</dbReference>
<dbReference type="EMBL" id="AC074135">
    <property type="status" value="NOT_ANNOTATED_CDS"/>
    <property type="molecule type" value="Genomic_DNA"/>
</dbReference>
<dbReference type="CCDS" id="CCDS59370.1"/>
<dbReference type="RefSeq" id="NP_001254645.1">
    <property type="nucleotide sequence ID" value="NM_001267716.2"/>
</dbReference>
<dbReference type="SMR" id="P0DKX0"/>
<dbReference type="BioGRID" id="132722">
    <property type="interactions" value="2"/>
</dbReference>
<dbReference type="STRING" id="9606.ENSP00000471593"/>
<dbReference type="GlyGen" id="P0DKX0">
    <property type="glycosylation" value="1 site, 1 O-linked glycan (1 site)"/>
</dbReference>
<dbReference type="iPTMnet" id="P0DKX0"/>
<dbReference type="PhosphoSitePlus" id="P0DKX0"/>
<dbReference type="BioMuta" id="ZNF728"/>
<dbReference type="DMDM" id="449061972"/>
<dbReference type="jPOST" id="P0DKX0"/>
<dbReference type="MassIVE" id="P0DKX0"/>
<dbReference type="PaxDb" id="9606-ENSP00000471593"/>
<dbReference type="PeptideAtlas" id="P0DKX0"/>
<dbReference type="Antibodypedia" id="82298">
    <property type="antibodies" value="2 antibodies from 2 providers"/>
</dbReference>
<dbReference type="DNASU" id="388523"/>
<dbReference type="Ensembl" id="ENST00000594710.2">
    <property type="protein sequence ID" value="ENSP00000471593.1"/>
    <property type="gene ID" value="ENSG00000269067.2"/>
</dbReference>
<dbReference type="GeneID" id="388523"/>
<dbReference type="KEGG" id="hsa:388523"/>
<dbReference type="MANE-Select" id="ENST00000594710.2">
    <property type="protein sequence ID" value="ENSP00000471593.1"/>
    <property type="RefSeq nucleotide sequence ID" value="NM_001267716.2"/>
    <property type="RefSeq protein sequence ID" value="NP_001254645.1"/>
</dbReference>
<dbReference type="UCSC" id="uc002nqz.3">
    <property type="organism name" value="human"/>
</dbReference>
<dbReference type="AGR" id="HGNC:32463"/>
<dbReference type="CTD" id="388523"/>
<dbReference type="DisGeNET" id="388523"/>
<dbReference type="GeneCards" id="ZNF728"/>
<dbReference type="HGNC" id="HGNC:32463">
    <property type="gene designation" value="ZNF728"/>
</dbReference>
<dbReference type="HPA" id="ENSG00000269067">
    <property type="expression patterns" value="Tissue enriched (testis)"/>
</dbReference>
<dbReference type="neXtProt" id="NX_P0DKX0"/>
<dbReference type="OpenTargets" id="ENSG00000269067"/>
<dbReference type="VEuPathDB" id="HostDB:ENSG00000269067"/>
<dbReference type="eggNOG" id="KOG1721">
    <property type="taxonomic scope" value="Eukaryota"/>
</dbReference>
<dbReference type="GeneTree" id="ENSGT00940000153236"/>
<dbReference type="HOGENOM" id="CLU_002678_44_5_1"/>
<dbReference type="InParanoid" id="P0DKX0"/>
<dbReference type="OMA" id="WDVAIQF"/>
<dbReference type="OrthoDB" id="9508584at2759"/>
<dbReference type="PAN-GO" id="P0DKX0">
    <property type="GO annotations" value="4 GO annotations based on evolutionary models"/>
</dbReference>
<dbReference type="PhylomeDB" id="P0DKX0"/>
<dbReference type="PathwayCommons" id="P0DKX0"/>
<dbReference type="BioGRID-ORCS" id="388523">
    <property type="hits" value="72 hits in 1099 CRISPR screens"/>
</dbReference>
<dbReference type="GenomeRNAi" id="388523"/>
<dbReference type="Pharos" id="P0DKX0">
    <property type="development level" value="Tdark"/>
</dbReference>
<dbReference type="PRO" id="PR:P0DKX0"/>
<dbReference type="Proteomes" id="UP000005640">
    <property type="component" value="Chromosome 19"/>
</dbReference>
<dbReference type="RNAct" id="P0DKX0">
    <property type="molecule type" value="protein"/>
</dbReference>
<dbReference type="Bgee" id="ENSG00000269067">
    <property type="expression patterns" value="Expressed in male germ line stem cell (sensu Vertebrata) in testis and 97 other cell types or tissues"/>
</dbReference>
<dbReference type="ExpressionAtlas" id="P0DKX0">
    <property type="expression patterns" value="baseline and differential"/>
</dbReference>
<dbReference type="GO" id="GO:0005634">
    <property type="term" value="C:nucleus"/>
    <property type="evidence" value="ECO:0000318"/>
    <property type="project" value="GO_Central"/>
</dbReference>
<dbReference type="GO" id="GO:0000981">
    <property type="term" value="F:DNA-binding transcription factor activity, RNA polymerase II-specific"/>
    <property type="evidence" value="ECO:0000318"/>
    <property type="project" value="GO_Central"/>
</dbReference>
<dbReference type="GO" id="GO:0000978">
    <property type="term" value="F:RNA polymerase II cis-regulatory region sequence-specific DNA binding"/>
    <property type="evidence" value="ECO:0000318"/>
    <property type="project" value="GO_Central"/>
</dbReference>
<dbReference type="GO" id="GO:0008270">
    <property type="term" value="F:zinc ion binding"/>
    <property type="evidence" value="ECO:0007669"/>
    <property type="project" value="UniProtKB-KW"/>
</dbReference>
<dbReference type="GO" id="GO:0045944">
    <property type="term" value="P:positive regulation of transcription by RNA polymerase II"/>
    <property type="evidence" value="ECO:0007669"/>
    <property type="project" value="UniProtKB-ARBA"/>
</dbReference>
<dbReference type="GO" id="GO:0006357">
    <property type="term" value="P:regulation of transcription by RNA polymerase II"/>
    <property type="evidence" value="ECO:0000318"/>
    <property type="project" value="GO_Central"/>
</dbReference>
<dbReference type="CDD" id="cd07765">
    <property type="entry name" value="KRAB_A-box"/>
    <property type="match status" value="1"/>
</dbReference>
<dbReference type="FunFam" id="3.30.160.60:FF:002472">
    <property type="match status" value="2"/>
</dbReference>
<dbReference type="FunFam" id="3.30.160.60:FF:001737">
    <property type="entry name" value="Zinc finger protein 100"/>
    <property type="match status" value="1"/>
</dbReference>
<dbReference type="FunFam" id="3.30.160.60:FF:000524">
    <property type="entry name" value="Zinc finger protein 155"/>
    <property type="match status" value="1"/>
</dbReference>
<dbReference type="FunFam" id="3.30.160.60:FF:000034">
    <property type="entry name" value="zinc finger protein 25"/>
    <property type="match status" value="3"/>
</dbReference>
<dbReference type="FunFam" id="3.30.160.60:FF:002090">
    <property type="entry name" value="Zinc finger protein 473"/>
    <property type="match status" value="2"/>
</dbReference>
<dbReference type="FunFam" id="3.30.160.60:FF:002254">
    <property type="entry name" value="Zinc finger protein 540"/>
    <property type="match status" value="1"/>
</dbReference>
<dbReference type="FunFam" id="3.30.160.60:FF:000176">
    <property type="entry name" value="zinc finger protein 70"/>
    <property type="match status" value="1"/>
</dbReference>
<dbReference type="FunFam" id="3.30.160.60:FF:002679">
    <property type="entry name" value="Zinc finger protein 726"/>
    <property type="match status" value="1"/>
</dbReference>
<dbReference type="FunFam" id="3.30.160.60:FF:000307">
    <property type="entry name" value="Zinc finger protein ZFP69 isoform 1"/>
    <property type="match status" value="2"/>
</dbReference>
<dbReference type="Gene3D" id="6.10.140.140">
    <property type="match status" value="1"/>
</dbReference>
<dbReference type="Gene3D" id="3.30.160.60">
    <property type="entry name" value="Classic Zinc Finger"/>
    <property type="match status" value="16"/>
</dbReference>
<dbReference type="InterPro" id="IPR050329">
    <property type="entry name" value="GLI_C2H2-zinc-finger"/>
</dbReference>
<dbReference type="InterPro" id="IPR001909">
    <property type="entry name" value="KRAB"/>
</dbReference>
<dbReference type="InterPro" id="IPR036051">
    <property type="entry name" value="KRAB_dom_sf"/>
</dbReference>
<dbReference type="InterPro" id="IPR036236">
    <property type="entry name" value="Znf_C2H2_sf"/>
</dbReference>
<dbReference type="InterPro" id="IPR013087">
    <property type="entry name" value="Znf_C2H2_type"/>
</dbReference>
<dbReference type="PANTHER" id="PTHR19818:SF158">
    <property type="entry name" value="C2H2-TYPE DOMAIN-CONTAINING PROTEIN-RELATED"/>
    <property type="match status" value="1"/>
</dbReference>
<dbReference type="PANTHER" id="PTHR19818">
    <property type="entry name" value="ZINC FINGER PROTEIN ZIC AND GLI"/>
    <property type="match status" value="1"/>
</dbReference>
<dbReference type="Pfam" id="PF01352">
    <property type="entry name" value="KRAB"/>
    <property type="match status" value="1"/>
</dbReference>
<dbReference type="Pfam" id="PF00096">
    <property type="entry name" value="zf-C2H2"/>
    <property type="match status" value="11"/>
</dbReference>
<dbReference type="Pfam" id="PF13465">
    <property type="entry name" value="zf-H2C2_2"/>
    <property type="match status" value="1"/>
</dbReference>
<dbReference type="SMART" id="SM00349">
    <property type="entry name" value="KRAB"/>
    <property type="match status" value="1"/>
</dbReference>
<dbReference type="SMART" id="SM00355">
    <property type="entry name" value="ZnF_C2H2"/>
    <property type="match status" value="14"/>
</dbReference>
<dbReference type="SUPFAM" id="SSF57667">
    <property type="entry name" value="beta-beta-alpha zinc fingers"/>
    <property type="match status" value="9"/>
</dbReference>
<dbReference type="SUPFAM" id="SSF109640">
    <property type="entry name" value="KRAB domain (Kruppel-associated box)"/>
    <property type="match status" value="1"/>
</dbReference>
<dbReference type="PROSITE" id="PS50805">
    <property type="entry name" value="KRAB"/>
    <property type="match status" value="1"/>
</dbReference>
<dbReference type="PROSITE" id="PS00028">
    <property type="entry name" value="ZINC_FINGER_C2H2_1"/>
    <property type="match status" value="14"/>
</dbReference>
<dbReference type="PROSITE" id="PS50157">
    <property type="entry name" value="ZINC_FINGER_C2H2_2"/>
    <property type="match status" value="14"/>
</dbReference>
<sequence>MGSLTFRDVAIQFSLEEWQCLDTAQQNLYRNVMLENYRNLVFLGIAAPKPDLIIFLEQGKEPWNMKRHELVKEPPVICSHFAQDLWPEQGREDSFQKVILRRYEKCGHENLQLKIGCTNVDECKVHKKGYNKLNQSLTTTQSKVFQCGKYANIFHKCSNSKRHKIRHTGKKLLKCKEYVRSFCMLSHLSQHKRIYTRENSYKSEEHGKAFNWSSALTYKRIHTGEKPCKCEECGKAFSKFSILTKHKVIHTGEKHYKCEECGKAFTRSSSLIEHKRSHAGEKPYKCEECGKAFSKASTLTAHKTIHAGEKPYKCEECGKAFNRSSNLMEHKRIHTGEKPCKCEECGKAFGNFSTLTKHKVIHTGEKPYKCEECGKAFSWPSSLTEHKRIHAGDKPYKCEECGKTFKWSSTLTKHKIIHTGEKPYKCEECGKAFTTFSSLTKHKVIHTGEKHYKCEECGKVFSWSSSLTTHKAIHAGEKLYKCEECGKAFKWSSNLMEHKRIHTGEKPYKCEECGKAFSKVANLTKHKVIHTGEKQYKCEECGKAFIWSSRLSEHKRIHTGEKPYKCEECGKAFSWVSVLNKHKKIHAGKKFYKCEECGKDFNQSSHLTTHKRIHTGGKTLQM</sequence>
<reference key="1">
    <citation type="journal article" date="2004" name="Nature">
        <title>The DNA sequence and biology of human chromosome 19.</title>
        <authorList>
            <person name="Grimwood J."/>
            <person name="Gordon L.A."/>
            <person name="Olsen A.S."/>
            <person name="Terry A."/>
            <person name="Schmutz J."/>
            <person name="Lamerdin J.E."/>
            <person name="Hellsten U."/>
            <person name="Goodstein D."/>
            <person name="Couronne O."/>
            <person name="Tran-Gyamfi M."/>
            <person name="Aerts A."/>
            <person name="Altherr M."/>
            <person name="Ashworth L."/>
            <person name="Bajorek E."/>
            <person name="Black S."/>
            <person name="Branscomb E."/>
            <person name="Caenepeel S."/>
            <person name="Carrano A.V."/>
            <person name="Caoile C."/>
            <person name="Chan Y.M."/>
            <person name="Christensen M."/>
            <person name="Cleland C.A."/>
            <person name="Copeland A."/>
            <person name="Dalin E."/>
            <person name="Dehal P."/>
            <person name="Denys M."/>
            <person name="Detter J.C."/>
            <person name="Escobar J."/>
            <person name="Flowers D."/>
            <person name="Fotopulos D."/>
            <person name="Garcia C."/>
            <person name="Georgescu A.M."/>
            <person name="Glavina T."/>
            <person name="Gomez M."/>
            <person name="Gonzales E."/>
            <person name="Groza M."/>
            <person name="Hammon N."/>
            <person name="Hawkins T."/>
            <person name="Haydu L."/>
            <person name="Ho I."/>
            <person name="Huang W."/>
            <person name="Israni S."/>
            <person name="Jett J."/>
            <person name="Kadner K."/>
            <person name="Kimball H."/>
            <person name="Kobayashi A."/>
            <person name="Larionov V."/>
            <person name="Leem S.-H."/>
            <person name="Lopez F."/>
            <person name="Lou Y."/>
            <person name="Lowry S."/>
            <person name="Malfatti S."/>
            <person name="Martinez D."/>
            <person name="McCready P.M."/>
            <person name="Medina C."/>
            <person name="Morgan J."/>
            <person name="Nelson K."/>
            <person name="Nolan M."/>
            <person name="Ovcharenko I."/>
            <person name="Pitluck S."/>
            <person name="Pollard M."/>
            <person name="Popkie A.P."/>
            <person name="Predki P."/>
            <person name="Quan G."/>
            <person name="Ramirez L."/>
            <person name="Rash S."/>
            <person name="Retterer J."/>
            <person name="Rodriguez A."/>
            <person name="Rogers S."/>
            <person name="Salamov A."/>
            <person name="Salazar A."/>
            <person name="She X."/>
            <person name="Smith D."/>
            <person name="Slezak T."/>
            <person name="Solovyev V."/>
            <person name="Thayer N."/>
            <person name="Tice H."/>
            <person name="Tsai M."/>
            <person name="Ustaszewska A."/>
            <person name="Vo N."/>
            <person name="Wagner M."/>
            <person name="Wheeler J."/>
            <person name="Wu K."/>
            <person name="Xie G."/>
            <person name="Yang J."/>
            <person name="Dubchak I."/>
            <person name="Furey T.S."/>
            <person name="DeJong P."/>
            <person name="Dickson M."/>
            <person name="Gordon D."/>
            <person name="Eichler E.E."/>
            <person name="Pennacchio L.A."/>
            <person name="Richardson P."/>
            <person name="Stubbs L."/>
            <person name="Rokhsar D.S."/>
            <person name="Myers R.M."/>
            <person name="Rubin E.M."/>
            <person name="Lucas S.M."/>
        </authorList>
    </citation>
    <scope>NUCLEOTIDE SEQUENCE [LARGE SCALE GENOMIC DNA]</scope>
</reference>
<organism>
    <name type="scientific">Homo sapiens</name>
    <name type="common">Human</name>
    <dbReference type="NCBI Taxonomy" id="9606"/>
    <lineage>
        <taxon>Eukaryota</taxon>
        <taxon>Metazoa</taxon>
        <taxon>Chordata</taxon>
        <taxon>Craniata</taxon>
        <taxon>Vertebrata</taxon>
        <taxon>Euteleostomi</taxon>
        <taxon>Mammalia</taxon>
        <taxon>Eutheria</taxon>
        <taxon>Euarchontoglires</taxon>
        <taxon>Primates</taxon>
        <taxon>Haplorrhini</taxon>
        <taxon>Catarrhini</taxon>
        <taxon>Hominidae</taxon>
        <taxon>Homo</taxon>
    </lineage>
</organism>
<protein>
    <recommendedName>
        <fullName>Zinc finger protein 728</fullName>
    </recommendedName>
</protein>
<keyword id="KW-0479">Metal-binding</keyword>
<keyword id="KW-1185">Reference proteome</keyword>
<keyword id="KW-0677">Repeat</keyword>
<keyword id="KW-0862">Zinc</keyword>
<keyword id="KW-0863">Zinc-finger</keyword>